<dbReference type="EC" id="2.7.7.6" evidence="1"/>
<dbReference type="EMBL" id="AB295947">
    <property type="protein sequence ID" value="BAF64896.1"/>
    <property type="molecule type" value="Genomic_DNA"/>
</dbReference>
<dbReference type="EMBL" id="AP009569">
    <property type="protein sequence ID" value="BAH11297.1"/>
    <property type="molecule type" value="Genomic_DNA"/>
</dbReference>
<dbReference type="RefSeq" id="YP_002519786.1">
    <property type="nucleotide sequence ID" value="NC_011942.1"/>
</dbReference>
<dbReference type="SMR" id="A6BM51"/>
<dbReference type="GeneID" id="7368186"/>
<dbReference type="GO" id="GO:0009507">
    <property type="term" value="C:chloroplast"/>
    <property type="evidence" value="ECO:0007669"/>
    <property type="project" value="UniProtKB-SubCell"/>
</dbReference>
<dbReference type="GO" id="GO:0000428">
    <property type="term" value="C:DNA-directed RNA polymerase complex"/>
    <property type="evidence" value="ECO:0007669"/>
    <property type="project" value="UniProtKB-KW"/>
</dbReference>
<dbReference type="GO" id="GO:0005739">
    <property type="term" value="C:mitochondrion"/>
    <property type="evidence" value="ECO:0007669"/>
    <property type="project" value="GOC"/>
</dbReference>
<dbReference type="GO" id="GO:0003677">
    <property type="term" value="F:DNA binding"/>
    <property type="evidence" value="ECO:0007669"/>
    <property type="project" value="UniProtKB-UniRule"/>
</dbReference>
<dbReference type="GO" id="GO:0003899">
    <property type="term" value="F:DNA-directed RNA polymerase activity"/>
    <property type="evidence" value="ECO:0007669"/>
    <property type="project" value="UniProtKB-UniRule"/>
</dbReference>
<dbReference type="GO" id="GO:0000287">
    <property type="term" value="F:magnesium ion binding"/>
    <property type="evidence" value="ECO:0007669"/>
    <property type="project" value="UniProtKB-UniRule"/>
</dbReference>
<dbReference type="GO" id="GO:0008270">
    <property type="term" value="F:zinc ion binding"/>
    <property type="evidence" value="ECO:0007669"/>
    <property type="project" value="UniProtKB-UniRule"/>
</dbReference>
<dbReference type="GO" id="GO:0006351">
    <property type="term" value="P:DNA-templated transcription"/>
    <property type="evidence" value="ECO:0007669"/>
    <property type="project" value="UniProtKB-UniRule"/>
</dbReference>
<dbReference type="Gene3D" id="1.10.40.90">
    <property type="match status" value="1"/>
</dbReference>
<dbReference type="Gene3D" id="2.40.40.20">
    <property type="match status" value="1"/>
</dbReference>
<dbReference type="Gene3D" id="4.10.860.120">
    <property type="entry name" value="RNA polymerase II, clamp domain"/>
    <property type="match status" value="1"/>
</dbReference>
<dbReference type="Gene3D" id="1.10.274.100">
    <property type="entry name" value="RNA polymerase Rpb1, domain 3"/>
    <property type="match status" value="1"/>
</dbReference>
<dbReference type="HAMAP" id="MF_01323">
    <property type="entry name" value="RNApol_bact_RpoC1"/>
    <property type="match status" value="1"/>
</dbReference>
<dbReference type="InterPro" id="IPR045867">
    <property type="entry name" value="DNA-dir_RpoC_beta_prime"/>
</dbReference>
<dbReference type="InterPro" id="IPR000722">
    <property type="entry name" value="RNA_pol_asu"/>
</dbReference>
<dbReference type="InterPro" id="IPR006592">
    <property type="entry name" value="RNA_pol_N"/>
</dbReference>
<dbReference type="InterPro" id="IPR007080">
    <property type="entry name" value="RNA_pol_Rpb1_1"/>
</dbReference>
<dbReference type="InterPro" id="IPR007066">
    <property type="entry name" value="RNA_pol_Rpb1_3"/>
</dbReference>
<dbReference type="InterPro" id="IPR042102">
    <property type="entry name" value="RNA_pol_Rpb1_3_sf"/>
</dbReference>
<dbReference type="InterPro" id="IPR044893">
    <property type="entry name" value="RNA_pol_Rpb1_clamp_domain"/>
</dbReference>
<dbReference type="InterPro" id="IPR034678">
    <property type="entry name" value="RNApol_RpoC1"/>
</dbReference>
<dbReference type="PANTHER" id="PTHR19376">
    <property type="entry name" value="DNA-DIRECTED RNA POLYMERASE"/>
    <property type="match status" value="1"/>
</dbReference>
<dbReference type="PANTHER" id="PTHR19376:SF68">
    <property type="entry name" value="DNA-DIRECTED RNA POLYMERASE SUBUNIT BETA"/>
    <property type="match status" value="1"/>
</dbReference>
<dbReference type="Pfam" id="PF04997">
    <property type="entry name" value="RNA_pol_Rpb1_1"/>
    <property type="match status" value="1"/>
</dbReference>
<dbReference type="Pfam" id="PF00623">
    <property type="entry name" value="RNA_pol_Rpb1_2"/>
    <property type="match status" value="2"/>
</dbReference>
<dbReference type="Pfam" id="PF04983">
    <property type="entry name" value="RNA_pol_Rpb1_3"/>
    <property type="match status" value="1"/>
</dbReference>
<dbReference type="SMART" id="SM00663">
    <property type="entry name" value="RPOLA_N"/>
    <property type="match status" value="1"/>
</dbReference>
<dbReference type="SUPFAM" id="SSF64484">
    <property type="entry name" value="beta and beta-prime subunits of DNA dependent RNA-polymerase"/>
    <property type="match status" value="1"/>
</dbReference>
<reference key="1">
    <citation type="journal article" date="2007" name="Mol. Biol. Evol.">
        <title>Chloroplast genome (cpDNA) of Cycas taitungensis and 56 cp protein-coding genes of Gnetum parvifolium: insights into cpDNA evolution and phylogeny of extant seed plants.</title>
        <authorList>
            <person name="Wu C.-S."/>
            <person name="Wang Y.-N."/>
            <person name="Liu S.-M."/>
            <person name="Chaw S.-M."/>
        </authorList>
    </citation>
    <scope>NUCLEOTIDE SEQUENCE [LARGE SCALE GENOMIC DNA]</scope>
</reference>
<reference key="2">
    <citation type="journal article" date="2009" name="Mol. Phylogenet. Evol.">
        <title>Evolution of reduced and compact chloroplast genomes (cpDNAs) in gnetophytes: Selection toward a lower-cost strategy.</title>
        <authorList>
            <person name="Wu C.-S."/>
            <person name="Lai Y.-T."/>
            <person name="Lin C.-P."/>
            <person name="Wang Y.-N."/>
            <person name="Chaw S.-M."/>
        </authorList>
    </citation>
    <scope>NUCLEOTIDE SEQUENCE [LARGE SCALE GENOMIC DNA]</scope>
</reference>
<gene>
    <name evidence="1" type="primary">rpoC1</name>
</gene>
<comment type="function">
    <text evidence="1">DNA-dependent RNA polymerase catalyzes the transcription of DNA into RNA using the four ribonucleoside triphosphates as substrates.</text>
</comment>
<comment type="catalytic activity">
    <reaction evidence="1">
        <text>RNA(n) + a ribonucleoside 5'-triphosphate = RNA(n+1) + diphosphate</text>
        <dbReference type="Rhea" id="RHEA:21248"/>
        <dbReference type="Rhea" id="RHEA-COMP:14527"/>
        <dbReference type="Rhea" id="RHEA-COMP:17342"/>
        <dbReference type="ChEBI" id="CHEBI:33019"/>
        <dbReference type="ChEBI" id="CHEBI:61557"/>
        <dbReference type="ChEBI" id="CHEBI:140395"/>
        <dbReference type="EC" id="2.7.7.6"/>
    </reaction>
</comment>
<comment type="cofactor">
    <cofactor evidence="1">
        <name>Mg(2+)</name>
        <dbReference type="ChEBI" id="CHEBI:18420"/>
    </cofactor>
    <text evidence="1">Binds 1 Mg(2+) ion per subunit.</text>
</comment>
<comment type="cofactor">
    <cofactor evidence="1">
        <name>Zn(2+)</name>
        <dbReference type="ChEBI" id="CHEBI:29105"/>
    </cofactor>
    <text evidence="1">Binds 1 Zn(2+) ion per subunit.</text>
</comment>
<comment type="subunit">
    <text evidence="1">In plastids the minimal PEP RNA polymerase catalytic core is composed of four subunits: alpha, beta, beta', and beta''. When a (nuclear-encoded) sigma factor is associated with the core the holoenzyme is formed, which can initiate transcription.</text>
</comment>
<comment type="subcellular location">
    <subcellularLocation>
        <location evidence="1">Plastid</location>
        <location evidence="1">Chloroplast</location>
    </subcellularLocation>
</comment>
<comment type="similarity">
    <text evidence="1">Belongs to the RNA polymerase beta' chain family. RpoC1 subfamily.</text>
</comment>
<keyword id="KW-0150">Chloroplast</keyword>
<keyword id="KW-0240">DNA-directed RNA polymerase</keyword>
<keyword id="KW-0460">Magnesium</keyword>
<keyword id="KW-0479">Metal-binding</keyword>
<keyword id="KW-0548">Nucleotidyltransferase</keyword>
<keyword id="KW-0934">Plastid</keyword>
<keyword id="KW-0804">Transcription</keyword>
<keyword id="KW-0808">Transferase</keyword>
<keyword id="KW-0862">Zinc</keyword>
<proteinExistence type="inferred from homology"/>
<feature type="chain" id="PRO_0000353490" description="DNA-directed RNA polymerase subunit beta'">
    <location>
        <begin position="1"/>
        <end position="747"/>
    </location>
</feature>
<feature type="binding site" evidence="1">
    <location>
        <position position="70"/>
    </location>
    <ligand>
        <name>Zn(2+)</name>
        <dbReference type="ChEBI" id="CHEBI:29105"/>
    </ligand>
</feature>
<feature type="binding site" evidence="1">
    <location>
        <position position="72"/>
    </location>
    <ligand>
        <name>Zn(2+)</name>
        <dbReference type="ChEBI" id="CHEBI:29105"/>
    </ligand>
</feature>
<feature type="binding site" evidence="1">
    <location>
        <position position="97"/>
    </location>
    <ligand>
        <name>Zn(2+)</name>
        <dbReference type="ChEBI" id="CHEBI:29105"/>
    </ligand>
</feature>
<feature type="binding site" evidence="1">
    <location>
        <position position="100"/>
    </location>
    <ligand>
        <name>Zn(2+)</name>
        <dbReference type="ChEBI" id="CHEBI:29105"/>
    </ligand>
</feature>
<feature type="binding site" evidence="1">
    <location>
        <position position="502"/>
    </location>
    <ligand>
        <name>Mg(2+)</name>
        <dbReference type="ChEBI" id="CHEBI:18420"/>
    </ligand>
</feature>
<feature type="binding site" evidence="1">
    <location>
        <position position="504"/>
    </location>
    <ligand>
        <name>Mg(2+)</name>
        <dbReference type="ChEBI" id="CHEBI:18420"/>
    </ligand>
</feature>
<feature type="binding site" evidence="1">
    <location>
        <position position="506"/>
    </location>
    <ligand>
        <name>Mg(2+)</name>
        <dbReference type="ChEBI" id="CHEBI:18420"/>
    </ligand>
</feature>
<sequence>MIDSQKEHQKLKITLVSPEQIRVWSETILPNGKRIGEVTNPKTIDLATNKPERNGSFCERIFGPVKSKKCACENKFGEDKKGFAFVDRKKTNDSGLCEHCGVEFMDSRIRRYRMGYIKLASPVTHIWYIKRVPSYIATLIGKQNSEIKDLVYCNLFLARPAVNKPTILRFRGLLQHGEITSWMEILVPYISGWNFVEFQERELATGGTSIQKQLIGLNLRALLNHSYMEWRKLLKNHRIQKRKNKIEKRKNFLVKRIKFAKNLIQAKINPEWMVLCLLPVLPPELRPIFVLGEQVVVESDFNKLYQKVNLRNKNLQNSFEIQGGPFYSTGDFLTLQKRLLQEAVDALLDSGKSGQPRKDHFRNRPYKSFSDVIAGKEGRFRANLLGKRVDYSARSVIVVGPSLALHQCGLPRELAIKLFQPFLIRNLIGQGVVANIRAAKLLIQRRIPVVWKILQQILLGHPVLLNRAPTLHKFGILAFQPILVKERAIRLHPAVCTGFNADFDGDQMAVHLPLSIEAILESRLLMFSHTNLLSPSNGSPITKPTQDMLLGLYILTTEKPRNISQFRCRPSNPTKKFLPEANLCFCNYDDVFIAYQKNRVSLKNPLWFRWKVVNGTILTSVDQEVPIEFQYQSLGTSQQIYEHYTIQRARSGKVLTIYIRTTVGRIIFNREIENAFLAFSKLSESPRAMPVFLNKSDTMFLMILNSCSAKQNCGKPAKRGLKYFVNSAEKILEVSLYETKKTSPFLQ</sequence>
<evidence type="ECO:0000255" key="1">
    <source>
        <dbReference type="HAMAP-Rule" id="MF_01323"/>
    </source>
</evidence>
<organism>
    <name type="scientific">Gnetum parvifolium</name>
    <name type="common">Small-leaved jointfir</name>
    <name type="synonym">Gnetum scandens var. parvifolium</name>
    <dbReference type="NCBI Taxonomy" id="33153"/>
    <lineage>
        <taxon>Eukaryota</taxon>
        <taxon>Viridiplantae</taxon>
        <taxon>Streptophyta</taxon>
        <taxon>Embryophyta</taxon>
        <taxon>Tracheophyta</taxon>
        <taxon>Spermatophyta</taxon>
        <taxon>Gnetopsida</taxon>
        <taxon>Gnetidae</taxon>
        <taxon>Gnetales</taxon>
        <taxon>Gnetaceae</taxon>
        <taxon>Gnetum</taxon>
    </lineage>
</organism>
<geneLocation type="chloroplast"/>
<accession>A6BM51</accession>
<accession>B7ZIB7</accession>
<name>RPOC1_GNEPA</name>
<protein>
    <recommendedName>
        <fullName evidence="1">DNA-directed RNA polymerase subunit beta'</fullName>
        <ecNumber evidence="1">2.7.7.6</ecNumber>
    </recommendedName>
    <alternativeName>
        <fullName evidence="1">PEP</fullName>
    </alternativeName>
    <alternativeName>
        <fullName evidence="1">Plastid-encoded RNA polymerase subunit beta'</fullName>
        <shortName evidence="1">RNA polymerase subunit beta'</shortName>
    </alternativeName>
</protein>